<accession>Q07UH2</accession>
<organism>
    <name type="scientific">Rhodopseudomonas palustris (strain BisA53)</name>
    <dbReference type="NCBI Taxonomy" id="316055"/>
    <lineage>
        <taxon>Bacteria</taxon>
        <taxon>Pseudomonadati</taxon>
        <taxon>Pseudomonadota</taxon>
        <taxon>Alphaproteobacteria</taxon>
        <taxon>Hyphomicrobiales</taxon>
        <taxon>Nitrobacteraceae</taxon>
        <taxon>Rhodopseudomonas</taxon>
    </lineage>
</organism>
<dbReference type="EC" id="5.3.1.24" evidence="1"/>
<dbReference type="EMBL" id="CP000463">
    <property type="protein sequence ID" value="ABJ04412.1"/>
    <property type="molecule type" value="Genomic_DNA"/>
</dbReference>
<dbReference type="SMR" id="Q07UH2"/>
<dbReference type="STRING" id="316055.RPE_0453"/>
<dbReference type="KEGG" id="rpe:RPE_0453"/>
<dbReference type="eggNOG" id="COG0135">
    <property type="taxonomic scope" value="Bacteria"/>
</dbReference>
<dbReference type="HOGENOM" id="CLU_076364_1_1_5"/>
<dbReference type="OrthoDB" id="9796196at2"/>
<dbReference type="UniPathway" id="UPA00035">
    <property type="reaction ID" value="UER00042"/>
</dbReference>
<dbReference type="GO" id="GO:0004640">
    <property type="term" value="F:phosphoribosylanthranilate isomerase activity"/>
    <property type="evidence" value="ECO:0007669"/>
    <property type="project" value="UniProtKB-UniRule"/>
</dbReference>
<dbReference type="GO" id="GO:0000162">
    <property type="term" value="P:L-tryptophan biosynthetic process"/>
    <property type="evidence" value="ECO:0007669"/>
    <property type="project" value="UniProtKB-UniRule"/>
</dbReference>
<dbReference type="CDD" id="cd00405">
    <property type="entry name" value="PRAI"/>
    <property type="match status" value="1"/>
</dbReference>
<dbReference type="Gene3D" id="3.20.20.70">
    <property type="entry name" value="Aldolase class I"/>
    <property type="match status" value="1"/>
</dbReference>
<dbReference type="HAMAP" id="MF_00135">
    <property type="entry name" value="PRAI"/>
    <property type="match status" value="1"/>
</dbReference>
<dbReference type="InterPro" id="IPR013785">
    <property type="entry name" value="Aldolase_TIM"/>
</dbReference>
<dbReference type="InterPro" id="IPR001240">
    <property type="entry name" value="PRAI_dom"/>
</dbReference>
<dbReference type="InterPro" id="IPR011060">
    <property type="entry name" value="RibuloseP-bd_barrel"/>
</dbReference>
<dbReference type="InterPro" id="IPR044643">
    <property type="entry name" value="TrpF_fam"/>
</dbReference>
<dbReference type="NCBIfam" id="NF002295">
    <property type="entry name" value="PRK01222.1-1"/>
    <property type="match status" value="1"/>
</dbReference>
<dbReference type="PANTHER" id="PTHR42894">
    <property type="entry name" value="N-(5'-PHOSPHORIBOSYL)ANTHRANILATE ISOMERASE"/>
    <property type="match status" value="1"/>
</dbReference>
<dbReference type="PANTHER" id="PTHR42894:SF1">
    <property type="entry name" value="N-(5'-PHOSPHORIBOSYL)ANTHRANILATE ISOMERASE"/>
    <property type="match status" value="1"/>
</dbReference>
<dbReference type="Pfam" id="PF00697">
    <property type="entry name" value="PRAI"/>
    <property type="match status" value="1"/>
</dbReference>
<dbReference type="SUPFAM" id="SSF51366">
    <property type="entry name" value="Ribulose-phoshate binding barrel"/>
    <property type="match status" value="1"/>
</dbReference>
<keyword id="KW-0028">Amino-acid biosynthesis</keyword>
<keyword id="KW-0057">Aromatic amino acid biosynthesis</keyword>
<keyword id="KW-0413">Isomerase</keyword>
<keyword id="KW-0822">Tryptophan biosynthesis</keyword>
<reference key="1">
    <citation type="submission" date="2006-09" db="EMBL/GenBank/DDBJ databases">
        <title>Complete sequence of Rhodopseudomonas palustris BisA53.</title>
        <authorList>
            <consortium name="US DOE Joint Genome Institute"/>
            <person name="Copeland A."/>
            <person name="Lucas S."/>
            <person name="Lapidus A."/>
            <person name="Barry K."/>
            <person name="Detter J.C."/>
            <person name="Glavina del Rio T."/>
            <person name="Hammon N."/>
            <person name="Israni S."/>
            <person name="Dalin E."/>
            <person name="Tice H."/>
            <person name="Pitluck S."/>
            <person name="Chain P."/>
            <person name="Malfatti S."/>
            <person name="Shin M."/>
            <person name="Vergez L."/>
            <person name="Schmutz J."/>
            <person name="Larimer F."/>
            <person name="Land M."/>
            <person name="Hauser L."/>
            <person name="Pelletier D.A."/>
            <person name="Kyrpides N."/>
            <person name="Kim E."/>
            <person name="Harwood C.S."/>
            <person name="Oda Y."/>
            <person name="Richardson P."/>
        </authorList>
    </citation>
    <scope>NUCLEOTIDE SEQUENCE [LARGE SCALE GENOMIC DNA]</scope>
    <source>
        <strain>BisA53</strain>
    </source>
</reference>
<feature type="chain" id="PRO_1000018632" description="N-(5'-phosphoribosyl)anthranilate isomerase">
    <location>
        <begin position="1"/>
        <end position="218"/>
    </location>
</feature>
<proteinExistence type="inferred from homology"/>
<evidence type="ECO:0000255" key="1">
    <source>
        <dbReference type="HAMAP-Rule" id="MF_00135"/>
    </source>
</evidence>
<comment type="catalytic activity">
    <reaction evidence="1">
        <text>N-(5-phospho-beta-D-ribosyl)anthranilate = 1-(2-carboxyphenylamino)-1-deoxy-D-ribulose 5-phosphate</text>
        <dbReference type="Rhea" id="RHEA:21540"/>
        <dbReference type="ChEBI" id="CHEBI:18277"/>
        <dbReference type="ChEBI" id="CHEBI:58613"/>
        <dbReference type="EC" id="5.3.1.24"/>
    </reaction>
</comment>
<comment type="pathway">
    <text evidence="1">Amino-acid biosynthesis; L-tryptophan biosynthesis; L-tryptophan from chorismate: step 3/5.</text>
</comment>
<comment type="similarity">
    <text evidence="1">Belongs to the TrpF family.</text>
</comment>
<protein>
    <recommendedName>
        <fullName evidence="1">N-(5'-phosphoribosyl)anthranilate isomerase</fullName>
        <shortName evidence="1">PRAI</shortName>
        <ecNumber evidence="1">5.3.1.24</ecNumber>
    </recommendedName>
</protein>
<name>TRPF_RHOP5</name>
<gene>
    <name evidence="1" type="primary">trpF</name>
    <name type="ordered locus">RPE_0453</name>
</gene>
<sequence length="218" mass="22834">MPLDVKICGLSTRATCDAALAAGADMVGLVFFSASPRHVDLGTAADLARAAQGRASVVALTVDADDAQLAAIVETVRPDLLQLHGRESPARVAEIKRRFALPVMKALPIATRDDLAALPDYAAVADRILFDARAPKGATRPGGLGVAFDWTLLRDLELTLPFMVSGGLTLDNVADALRITRAGGVDISSGVESAPGVKDPELIRAFIRAARATERLSV</sequence>